<evidence type="ECO:0000255" key="1">
    <source>
        <dbReference type="HAMAP-Rule" id="MF_00691"/>
    </source>
</evidence>
<accession>Q3SSH7</accession>
<keyword id="KW-0067">ATP-binding</keyword>
<keyword id="KW-0378">Hydrolase</keyword>
<keyword id="KW-0547">Nucleotide-binding</keyword>
<keyword id="KW-1185">Reference proteome</keyword>
<proteinExistence type="inferred from homology"/>
<sequence length="255" mass="26808">MTIDLNCDLGESFGVWPMGSDAAMIELATSVNIACGFHAGDADTMRKTVDLAGTHGVNIGAHPGYRDLHGFGRRPIAGLTSGEIENLVAYQIGALQAIATMAGHRVTHVKAHGALSNVACEDDMTARAIASAVKAVDPGLVFVVPANSRLVAAGEAAGLPLAHEVFADRAYEDDGSLVSRRKPGAVLHNADEIARRVVTMLQSGEVVSITGKPIRMRMDTVCIHGDTPDAVRIARTLRQALKDNGIAVAPFNLIK</sequence>
<feature type="chain" id="PRO_1000045213" description="5-oxoprolinase subunit A">
    <location>
        <begin position="1"/>
        <end position="255"/>
    </location>
</feature>
<protein>
    <recommendedName>
        <fullName evidence="1">5-oxoprolinase subunit A</fullName>
        <shortName evidence="1">5-OPase subunit A</shortName>
        <ecNumber evidence="1">3.5.2.9</ecNumber>
    </recommendedName>
    <alternativeName>
        <fullName evidence="1">5-oxoprolinase (ATP-hydrolyzing) subunit A</fullName>
    </alternativeName>
</protein>
<organism>
    <name type="scientific">Nitrobacter winogradskyi (strain ATCC 25391 / DSM 10237 / CIP 104748 / NCIMB 11846 / Nb-255)</name>
    <dbReference type="NCBI Taxonomy" id="323098"/>
    <lineage>
        <taxon>Bacteria</taxon>
        <taxon>Pseudomonadati</taxon>
        <taxon>Pseudomonadota</taxon>
        <taxon>Alphaproteobacteria</taxon>
        <taxon>Hyphomicrobiales</taxon>
        <taxon>Nitrobacteraceae</taxon>
        <taxon>Nitrobacter</taxon>
    </lineage>
</organism>
<dbReference type="EC" id="3.5.2.9" evidence="1"/>
<dbReference type="EMBL" id="CP000115">
    <property type="protein sequence ID" value="ABA04764.1"/>
    <property type="molecule type" value="Genomic_DNA"/>
</dbReference>
<dbReference type="RefSeq" id="WP_011314770.1">
    <property type="nucleotide sequence ID" value="NC_007406.1"/>
</dbReference>
<dbReference type="SMR" id="Q3SSH7"/>
<dbReference type="STRING" id="323098.Nwi_1503"/>
<dbReference type="KEGG" id="nwi:Nwi_1503"/>
<dbReference type="eggNOG" id="COG1540">
    <property type="taxonomic scope" value="Bacteria"/>
</dbReference>
<dbReference type="HOGENOM" id="CLU_069535_0_0_5"/>
<dbReference type="OrthoDB" id="9773478at2"/>
<dbReference type="Proteomes" id="UP000002531">
    <property type="component" value="Chromosome"/>
</dbReference>
<dbReference type="GO" id="GO:0017168">
    <property type="term" value="F:5-oxoprolinase (ATP-hydrolyzing) activity"/>
    <property type="evidence" value="ECO:0007669"/>
    <property type="project" value="UniProtKB-UniRule"/>
</dbReference>
<dbReference type="GO" id="GO:0005524">
    <property type="term" value="F:ATP binding"/>
    <property type="evidence" value="ECO:0007669"/>
    <property type="project" value="UniProtKB-UniRule"/>
</dbReference>
<dbReference type="GO" id="GO:0005975">
    <property type="term" value="P:carbohydrate metabolic process"/>
    <property type="evidence" value="ECO:0007669"/>
    <property type="project" value="InterPro"/>
</dbReference>
<dbReference type="CDD" id="cd10787">
    <property type="entry name" value="LamB_YcsF_like"/>
    <property type="match status" value="1"/>
</dbReference>
<dbReference type="Gene3D" id="3.20.20.370">
    <property type="entry name" value="Glycoside hydrolase/deacetylase"/>
    <property type="match status" value="1"/>
</dbReference>
<dbReference type="HAMAP" id="MF_00691">
    <property type="entry name" value="PxpA"/>
    <property type="match status" value="1"/>
</dbReference>
<dbReference type="InterPro" id="IPR011330">
    <property type="entry name" value="Glyco_hydro/deAcase_b/a-brl"/>
</dbReference>
<dbReference type="InterPro" id="IPR005501">
    <property type="entry name" value="LamB/YcsF/PxpA-like"/>
</dbReference>
<dbReference type="NCBIfam" id="NF003814">
    <property type="entry name" value="PRK05406.1-3"/>
    <property type="match status" value="1"/>
</dbReference>
<dbReference type="NCBIfam" id="NF003816">
    <property type="entry name" value="PRK05406.1-5"/>
    <property type="match status" value="1"/>
</dbReference>
<dbReference type="PANTHER" id="PTHR30292:SF0">
    <property type="entry name" value="5-OXOPROLINASE SUBUNIT A"/>
    <property type="match status" value="1"/>
</dbReference>
<dbReference type="PANTHER" id="PTHR30292">
    <property type="entry name" value="UNCHARACTERIZED PROTEIN YBGL-RELATED"/>
    <property type="match status" value="1"/>
</dbReference>
<dbReference type="Pfam" id="PF03746">
    <property type="entry name" value="LamB_YcsF"/>
    <property type="match status" value="1"/>
</dbReference>
<dbReference type="SUPFAM" id="SSF88713">
    <property type="entry name" value="Glycoside hydrolase/deacetylase"/>
    <property type="match status" value="1"/>
</dbReference>
<name>PXPA_NITWN</name>
<gene>
    <name evidence="1" type="primary">pxpA</name>
    <name type="ordered locus">Nwi_1503</name>
</gene>
<reference key="1">
    <citation type="journal article" date="2006" name="Appl. Environ. Microbiol.">
        <title>Genome sequence of the chemolithoautotrophic nitrite-oxidizing bacterium Nitrobacter winogradskyi Nb-255.</title>
        <authorList>
            <person name="Starkenburg S.R."/>
            <person name="Chain P.S.G."/>
            <person name="Sayavedra-Soto L.A."/>
            <person name="Hauser L."/>
            <person name="Land M.L."/>
            <person name="Larimer F.W."/>
            <person name="Malfatti S.A."/>
            <person name="Klotz M.G."/>
            <person name="Bottomley P.J."/>
            <person name="Arp D.J."/>
            <person name="Hickey W.J."/>
        </authorList>
    </citation>
    <scope>NUCLEOTIDE SEQUENCE [LARGE SCALE GENOMIC DNA]</scope>
    <source>
        <strain>ATCC 25391 / DSM 10237 / CIP 104748 / NCIMB 11846 / Nb-255</strain>
    </source>
</reference>
<comment type="function">
    <text evidence="1">Catalyzes the cleavage of 5-oxoproline to form L-glutamate coupled to the hydrolysis of ATP to ADP and inorganic phosphate.</text>
</comment>
<comment type="catalytic activity">
    <reaction evidence="1">
        <text>5-oxo-L-proline + ATP + 2 H2O = L-glutamate + ADP + phosphate + H(+)</text>
        <dbReference type="Rhea" id="RHEA:10348"/>
        <dbReference type="ChEBI" id="CHEBI:15377"/>
        <dbReference type="ChEBI" id="CHEBI:15378"/>
        <dbReference type="ChEBI" id="CHEBI:29985"/>
        <dbReference type="ChEBI" id="CHEBI:30616"/>
        <dbReference type="ChEBI" id="CHEBI:43474"/>
        <dbReference type="ChEBI" id="CHEBI:58402"/>
        <dbReference type="ChEBI" id="CHEBI:456216"/>
        <dbReference type="EC" id="3.5.2.9"/>
    </reaction>
</comment>
<comment type="subunit">
    <text evidence="1">Forms a complex composed of PxpA, PxpB and PxpC.</text>
</comment>
<comment type="similarity">
    <text evidence="1">Belongs to the LamB/PxpA family.</text>
</comment>